<name>GLPD_STAAR</name>
<comment type="catalytic activity">
    <reaction>
        <text>a quinone + sn-glycerol 3-phosphate = dihydroxyacetone phosphate + a quinol</text>
        <dbReference type="Rhea" id="RHEA:18977"/>
        <dbReference type="ChEBI" id="CHEBI:24646"/>
        <dbReference type="ChEBI" id="CHEBI:57597"/>
        <dbReference type="ChEBI" id="CHEBI:57642"/>
        <dbReference type="ChEBI" id="CHEBI:132124"/>
        <dbReference type="EC" id="1.1.5.3"/>
    </reaction>
</comment>
<comment type="cofactor">
    <cofactor evidence="1">
        <name>FAD</name>
        <dbReference type="ChEBI" id="CHEBI:57692"/>
    </cofactor>
</comment>
<comment type="pathway">
    <text>Polyol metabolism; glycerol degradation via glycerol kinase pathway; glycerone phosphate from sn-glycerol 3-phosphate (aerobic route): step 1/1.</text>
</comment>
<comment type="subcellular location">
    <subcellularLocation>
        <location evidence="1">Cytoplasm</location>
    </subcellularLocation>
</comment>
<comment type="similarity">
    <text evidence="3">Belongs to the FAD-dependent glycerol-3-phosphate dehydrogenase family.</text>
</comment>
<comment type="sequence caution" evidence="3">
    <conflict type="erroneous initiation">
        <sequence resource="EMBL-CDS" id="CAG40279"/>
    </conflict>
</comment>
<proteinExistence type="inferred from homology"/>
<dbReference type="EC" id="1.1.5.3"/>
<dbReference type="EMBL" id="BX571856">
    <property type="protein sequence ID" value="CAG40279.1"/>
    <property type="status" value="ALT_INIT"/>
    <property type="molecule type" value="Genomic_DNA"/>
</dbReference>
<dbReference type="RefSeq" id="WP_001218603.1">
    <property type="nucleotide sequence ID" value="NC_002952.2"/>
</dbReference>
<dbReference type="SMR" id="Q6GHD4"/>
<dbReference type="KEGG" id="sar:SAR1276"/>
<dbReference type="HOGENOM" id="CLU_015740_5_2_9"/>
<dbReference type="UniPathway" id="UPA00618">
    <property type="reaction ID" value="UER00674"/>
</dbReference>
<dbReference type="Proteomes" id="UP000000596">
    <property type="component" value="Chromosome"/>
</dbReference>
<dbReference type="GO" id="GO:0005737">
    <property type="term" value="C:cytoplasm"/>
    <property type="evidence" value="ECO:0007669"/>
    <property type="project" value="UniProtKB-SubCell"/>
</dbReference>
<dbReference type="GO" id="GO:0004368">
    <property type="term" value="F:glycerol-3-phosphate dehydrogenase (quinone) activity"/>
    <property type="evidence" value="ECO:0007669"/>
    <property type="project" value="UniProtKB-EC"/>
</dbReference>
<dbReference type="GO" id="GO:0019563">
    <property type="term" value="P:glycerol catabolic process"/>
    <property type="evidence" value="ECO:0007669"/>
    <property type="project" value="UniProtKB-UniPathway"/>
</dbReference>
<dbReference type="GO" id="GO:0046168">
    <property type="term" value="P:glycerol-3-phosphate catabolic process"/>
    <property type="evidence" value="ECO:0007669"/>
    <property type="project" value="TreeGrafter"/>
</dbReference>
<dbReference type="Gene3D" id="1.10.8.870">
    <property type="entry name" value="Alpha-glycerophosphate oxidase, cap domain"/>
    <property type="match status" value="1"/>
</dbReference>
<dbReference type="Gene3D" id="3.30.9.10">
    <property type="entry name" value="D-Amino Acid Oxidase, subunit A, domain 2"/>
    <property type="match status" value="1"/>
</dbReference>
<dbReference type="Gene3D" id="3.50.50.60">
    <property type="entry name" value="FAD/NAD(P)-binding domain"/>
    <property type="match status" value="1"/>
</dbReference>
<dbReference type="InterPro" id="IPR031656">
    <property type="entry name" value="DAO_C"/>
</dbReference>
<dbReference type="InterPro" id="IPR038299">
    <property type="entry name" value="DAO_C_sf"/>
</dbReference>
<dbReference type="InterPro" id="IPR006076">
    <property type="entry name" value="FAD-dep_OxRdtase"/>
</dbReference>
<dbReference type="InterPro" id="IPR036188">
    <property type="entry name" value="FAD/NAD-bd_sf"/>
</dbReference>
<dbReference type="InterPro" id="IPR000447">
    <property type="entry name" value="G3P_DH_FAD-dep"/>
</dbReference>
<dbReference type="PANTHER" id="PTHR11985:SF35">
    <property type="entry name" value="ANAEROBIC GLYCEROL-3-PHOSPHATE DEHYDROGENASE SUBUNIT A"/>
    <property type="match status" value="1"/>
</dbReference>
<dbReference type="PANTHER" id="PTHR11985">
    <property type="entry name" value="GLYCEROL-3-PHOSPHATE DEHYDROGENASE"/>
    <property type="match status" value="1"/>
</dbReference>
<dbReference type="Pfam" id="PF01266">
    <property type="entry name" value="DAO"/>
    <property type="match status" value="1"/>
</dbReference>
<dbReference type="Pfam" id="PF16901">
    <property type="entry name" value="DAO_C"/>
    <property type="match status" value="1"/>
</dbReference>
<dbReference type="PRINTS" id="PR01001">
    <property type="entry name" value="FADG3PDH"/>
</dbReference>
<dbReference type="SUPFAM" id="SSF54373">
    <property type="entry name" value="FAD-linked reductases, C-terminal domain"/>
    <property type="match status" value="1"/>
</dbReference>
<dbReference type="SUPFAM" id="SSF51905">
    <property type="entry name" value="FAD/NAD(P)-binding domain"/>
    <property type="match status" value="1"/>
</dbReference>
<dbReference type="PROSITE" id="PS00977">
    <property type="entry name" value="FAD_G3PDH_1"/>
    <property type="match status" value="1"/>
</dbReference>
<dbReference type="PROSITE" id="PS00978">
    <property type="entry name" value="FAD_G3PDH_2"/>
    <property type="match status" value="1"/>
</dbReference>
<accession>Q6GHD4</accession>
<evidence type="ECO:0000250" key="1"/>
<evidence type="ECO:0000255" key="2"/>
<evidence type="ECO:0000305" key="3"/>
<keyword id="KW-0963">Cytoplasm</keyword>
<keyword id="KW-0274">FAD</keyword>
<keyword id="KW-0285">Flavoprotein</keyword>
<keyword id="KW-0319">Glycerol metabolism</keyword>
<keyword id="KW-0560">Oxidoreductase</keyword>
<feature type="chain" id="PRO_0000270062" description="Aerobic glycerol-3-phosphate dehydrogenase">
    <location>
        <begin position="1"/>
        <end position="557"/>
    </location>
</feature>
<feature type="binding site" evidence="2">
    <location>
        <begin position="21"/>
        <end position="49"/>
    </location>
    <ligand>
        <name>FAD</name>
        <dbReference type="ChEBI" id="CHEBI:57692"/>
    </ligand>
</feature>
<organism>
    <name type="scientific">Staphylococcus aureus (strain MRSA252)</name>
    <dbReference type="NCBI Taxonomy" id="282458"/>
    <lineage>
        <taxon>Bacteria</taxon>
        <taxon>Bacillati</taxon>
        <taxon>Bacillota</taxon>
        <taxon>Bacilli</taxon>
        <taxon>Bacillales</taxon>
        <taxon>Staphylococcaceae</taxon>
        <taxon>Staphylococcus</taxon>
    </lineage>
</organism>
<reference key="1">
    <citation type="journal article" date="2004" name="Proc. Natl. Acad. Sci. U.S.A.">
        <title>Complete genomes of two clinical Staphylococcus aureus strains: evidence for the rapid evolution of virulence and drug resistance.</title>
        <authorList>
            <person name="Holden M.T.G."/>
            <person name="Feil E.J."/>
            <person name="Lindsay J.A."/>
            <person name="Peacock S.J."/>
            <person name="Day N.P.J."/>
            <person name="Enright M.C."/>
            <person name="Foster T.J."/>
            <person name="Moore C.E."/>
            <person name="Hurst L."/>
            <person name="Atkin R."/>
            <person name="Barron A."/>
            <person name="Bason N."/>
            <person name="Bentley S.D."/>
            <person name="Chillingworth C."/>
            <person name="Chillingworth T."/>
            <person name="Churcher C."/>
            <person name="Clark L."/>
            <person name="Corton C."/>
            <person name="Cronin A."/>
            <person name="Doggett J."/>
            <person name="Dowd L."/>
            <person name="Feltwell T."/>
            <person name="Hance Z."/>
            <person name="Harris B."/>
            <person name="Hauser H."/>
            <person name="Holroyd S."/>
            <person name="Jagels K."/>
            <person name="James K.D."/>
            <person name="Lennard N."/>
            <person name="Line A."/>
            <person name="Mayes R."/>
            <person name="Moule S."/>
            <person name="Mungall K."/>
            <person name="Ormond D."/>
            <person name="Quail M.A."/>
            <person name="Rabbinowitsch E."/>
            <person name="Rutherford K.M."/>
            <person name="Sanders M."/>
            <person name="Sharp S."/>
            <person name="Simmonds M."/>
            <person name="Stevens K."/>
            <person name="Whitehead S."/>
            <person name="Barrell B.G."/>
            <person name="Spratt B.G."/>
            <person name="Parkhill J."/>
        </authorList>
    </citation>
    <scope>NUCLEOTIDE SEQUENCE [LARGE SCALE GENOMIC DNA]</scope>
    <source>
        <strain>MRSA252</strain>
    </source>
</reference>
<gene>
    <name type="primary">glpD</name>
    <name type="ordered locus">SAR1276</name>
</gene>
<sequence>MALSTFKREHIKKNLRNDEYDLVIIGGGITGAGIALDASERGMKVALVEMQDFAQGTSSRSTKLVHGGLRYLKQFQIGVVAETGKERAIVYENGPHVTTPEWMLLPMHKGGTFGKFSTSIGLGMYDRLAGVKKSERKKMLSKKETLAKEPLVKKEGLKGGGYYVEYRTDDARLTIEVMKRAAEKGAEIINYTKSEHFTYDKNQQVNGVNVIDKLTNENYTIKAKKVVNAAGPWVDDVRSGDYARNNKKLRLTKGVHVVIDQSKFPLGQAVYFDTEKDGRMIFAIPREGKAYVGTTDTFYDNIKSSPLTTQEDRDYLIDAINYMFPSVNVTDEDIESTWAGIRPLIYEEGKDPSEISRKDEIWEGKSGLLTIAGGKLTGYRHMAQDIVDLVSKRLKKDYGLTFSPCNTKGLAISGGDVGGSKNFDAFVEQKVDVAKGFGIDEDVARRLASKYGSNVDELFNIAQTSQYHDSKLPLEIYVELVYSIQQEMVYKPNDFLVRRSGKMYFNIKDVLDYKDSIIDIMADMLDYSPAQIEAYTEEVEQAIKEAQHGNNQPAVKE</sequence>
<protein>
    <recommendedName>
        <fullName>Aerobic glycerol-3-phosphate dehydrogenase</fullName>
        <ecNumber>1.1.5.3</ecNumber>
    </recommendedName>
</protein>